<sequence>MGMRMMFTVFLLVVLAATIVSFTSDRASDGRNVAAKAFHRIGRTIRDECCSNPACRVNNPHVCRRR</sequence>
<dbReference type="EMBL" id="AB910812">
    <property type="protein sequence ID" value="BAO65580.1"/>
    <property type="molecule type" value="mRNA"/>
</dbReference>
<dbReference type="EMBL" id="AB910893">
    <property type="protein sequence ID" value="BAO65661.1"/>
    <property type="molecule type" value="mRNA"/>
</dbReference>
<dbReference type="PDB" id="1MTQ">
    <property type="method" value="NMR"/>
    <property type="chains" value="A=45-63"/>
</dbReference>
<dbReference type="PDB" id="5UG3">
    <property type="method" value="NMR"/>
    <property type="chains" value="A=45-63"/>
</dbReference>
<dbReference type="PDB" id="5UG5">
    <property type="method" value="NMR"/>
    <property type="chains" value="A=45-63"/>
</dbReference>
<dbReference type="PDBsum" id="1MTQ"/>
<dbReference type="PDBsum" id="5UG3"/>
<dbReference type="PDBsum" id="5UG5"/>
<dbReference type="SMR" id="P60274"/>
<dbReference type="ConoServer" id="98">
    <property type="toxin name" value="GID"/>
</dbReference>
<dbReference type="EvolutionaryTrace" id="P60274"/>
<dbReference type="GO" id="GO:0005576">
    <property type="term" value="C:extracellular region"/>
    <property type="evidence" value="ECO:0007669"/>
    <property type="project" value="UniProtKB-SubCell"/>
</dbReference>
<dbReference type="GO" id="GO:0035792">
    <property type="term" value="C:host cell postsynaptic membrane"/>
    <property type="evidence" value="ECO:0007669"/>
    <property type="project" value="UniProtKB-KW"/>
</dbReference>
<dbReference type="GO" id="GO:0030550">
    <property type="term" value="F:acetylcholine receptor inhibitor activity"/>
    <property type="evidence" value="ECO:0007669"/>
    <property type="project" value="UniProtKB-KW"/>
</dbReference>
<dbReference type="GO" id="GO:0099106">
    <property type="term" value="F:ion channel regulator activity"/>
    <property type="evidence" value="ECO:0007669"/>
    <property type="project" value="UniProtKB-KW"/>
</dbReference>
<dbReference type="GO" id="GO:0090729">
    <property type="term" value="F:toxin activity"/>
    <property type="evidence" value="ECO:0007669"/>
    <property type="project" value="UniProtKB-KW"/>
</dbReference>
<dbReference type="InterPro" id="IPR009958">
    <property type="entry name" value="Conotoxin_a-typ"/>
</dbReference>
<dbReference type="InterPro" id="IPR018072">
    <property type="entry name" value="Conotoxin_a-typ_CS"/>
</dbReference>
<dbReference type="Pfam" id="PF07365">
    <property type="entry name" value="Toxin_8"/>
    <property type="match status" value="1"/>
</dbReference>
<dbReference type="PROSITE" id="PS60014">
    <property type="entry name" value="ALPHA_CONOTOXIN"/>
    <property type="match status" value="1"/>
</dbReference>
<organism>
    <name type="scientific">Conus geographus</name>
    <name type="common">Geography cone</name>
    <name type="synonym">Nubecula geographus</name>
    <dbReference type="NCBI Taxonomy" id="6491"/>
    <lineage>
        <taxon>Eukaryota</taxon>
        <taxon>Metazoa</taxon>
        <taxon>Spiralia</taxon>
        <taxon>Lophotrochozoa</taxon>
        <taxon>Mollusca</taxon>
        <taxon>Gastropoda</taxon>
        <taxon>Caenogastropoda</taxon>
        <taxon>Neogastropoda</taxon>
        <taxon>Conoidea</taxon>
        <taxon>Conidae</taxon>
        <taxon>Conus</taxon>
        <taxon>Gastridium</taxon>
    </lineage>
</organism>
<evidence type="ECO:0000250" key="1">
    <source>
        <dbReference type="UniProtKB" id="P56636"/>
    </source>
</evidence>
<evidence type="ECO:0000255" key="2"/>
<evidence type="ECO:0000269" key="3">
    <source>
    </source>
</evidence>
<evidence type="ECO:0000269" key="4">
    <source>
    </source>
</evidence>
<evidence type="ECO:0000269" key="5">
    <source>
    </source>
</evidence>
<evidence type="ECO:0000269" key="6">
    <source>
    </source>
</evidence>
<evidence type="ECO:0000269" key="7">
    <source>
    </source>
</evidence>
<evidence type="ECO:0000303" key="8">
    <source>
    </source>
</evidence>
<evidence type="ECO:0000305" key="9"/>
<evidence type="ECO:0000305" key="10">
    <source>
    </source>
</evidence>
<evidence type="ECO:0000312" key="11">
    <source>
        <dbReference type="PDB" id="1MTQ"/>
    </source>
</evidence>
<evidence type="ECO:0007829" key="12">
    <source>
        <dbReference type="PDB" id="1MTQ"/>
    </source>
</evidence>
<evidence type="ECO:0007829" key="13">
    <source>
        <dbReference type="PDB" id="5UG3"/>
    </source>
</evidence>
<feature type="signal peptide" evidence="2">
    <location>
        <begin position="1"/>
        <end position="21"/>
    </location>
</feature>
<feature type="propeptide" id="PRO_0000439929" evidence="3">
    <location>
        <begin position="22"/>
        <end position="44"/>
    </location>
</feature>
<feature type="peptide" id="PRO_0000044459" description="Alpha-conotoxin GID" evidence="3">
    <location>
        <begin position="45"/>
        <end position="63"/>
    </location>
</feature>
<feature type="region of interest" description="N-terminal tail important for activity on alpha-3-beta-2/CHRNA3-CHRNB2 and alpha-4-beta-2/CHRNA4-CHRNB2 nAChR" evidence="3 5 6">
    <location>
        <begin position="45"/>
        <end position="48"/>
    </location>
</feature>
<feature type="region of interest" description="Ser-Xaa-Pro motif, crucial for potent interaction with nAChR" evidence="1">
    <location>
        <begin position="51"/>
        <end position="53"/>
    </location>
</feature>
<feature type="site" description="Key residue for activity on alpha-7/CHRNA7, alpha-3-beta-2/CHRNA3-CHRNB2 and alpha-4-beta-2/CHRNA4-CHRNB2 nAChR" evidence="5 6">
    <location>
        <position position="47"/>
    </location>
</feature>
<feature type="site" description="Key residue for activity on alpha-7/CHRNA7, alpha-3-beta-2/CHRNA3-CHRNB2 and alpha-4-beta-2/CHRNA4-CHRNB2 nAChR" evidence="5">
    <location>
        <position position="53"/>
    </location>
</feature>
<feature type="site" description="Important for determining subtype selectivity" evidence="6">
    <location>
        <position position="54"/>
    </location>
</feature>
<feature type="site" description="Key residue for activity on alpha-7/CHRNA7 and alpha-4-beta-2/CHRNA4-CHRNB2 nAChR" evidence="3 5">
    <location>
        <position position="56"/>
    </location>
</feature>
<feature type="site" description="Important for determining subtype selectivity" evidence="6">
    <location>
        <position position="57"/>
    </location>
</feature>
<feature type="site" description="Key residue for activity on alpha-7/CHRNA7 and alpha-4-beta-2/CHRNA4-CHRNB2 nAChR" evidence="5">
    <location>
        <position position="58"/>
    </location>
</feature>
<feature type="modified residue" description="4-carboxyglutamate" evidence="3">
    <location>
        <position position="48"/>
    </location>
</feature>
<feature type="modified residue" description="4-hydroxyproline" evidence="3">
    <location>
        <position position="60"/>
    </location>
</feature>
<feature type="disulfide bond" evidence="3 11">
    <location>
        <begin position="49"/>
        <end position="55"/>
    </location>
</feature>
<feature type="disulfide bond" evidence="3 11">
    <location>
        <begin position="50"/>
        <end position="63"/>
    </location>
</feature>
<feature type="mutagenesis site" description="No change or small decrease in inhibitory potency on alpha-3-beta-2/CHRNA3-CHRNB2 and alpha-7/CHRNA7 nAChRs, 4.4-fold decrease in inhibitory potency on alpha-4-beta-2/CHRNA4-CHRNB2 nAChR." evidence="3">
    <location>
        <begin position="45"/>
        <end position="48"/>
    </location>
</feature>
<feature type="mutagenesis site" description="3.4-fold and 9.6-fold decrease in inhibitory potency on alpha-7/CHRNA7 and alpha-3-beta-2/CHRNA3-CHRNB2 nAChR, respectively, and complete loss of activity on alpha-4-beta-2/CHRNA4-CHRNB2 nAChR; when associated with lack of gamma-carboxyglutamation at Glu-48." evidence="5">
    <original>IRD</original>
    <variation>A</variation>
    <location>
        <begin position="45"/>
        <end position="47"/>
    </location>
</feature>
<feature type="mutagenesis site" description="19.7-fold and 22.9-fold decrease in inhibitory potency on alpha-7/CHRNA7 and alpha-3-beta-2/CHRNA3-CHRNB2 nAChR, respectively, and complete loss of activity on alpha-4-beta-2/CHRNA4-CHRNB2 nAChR; when associated with A-48. 2.5-fold and 18-fold decrease in inhibitory potency on alpha-7/CHRNA7 and alpha-3-beta-2/CHRNA3-CHRNB2 nAChR, respectively, and complete loss of activity on alpha-4-beta-2/CHRNA4-CHRNB2 nAChR; when associated with lack of gamma-carboxyglutamation at Glu-48." evidence="5">
    <location>
        <begin position="45"/>
        <end position="47"/>
    </location>
</feature>
<feature type="mutagenesis site" description="2.8-fold and 5.8-fold decrease in inhibitory potency on alpha-7/CHRNA7 and alpha-3-beta-2/CHRNA3-CHRNB2 nAChR, respectively, and complete loss of activity on alpha-4-beta-2/CHRNA4-CHRNB2 nAChR; when associated with lack of gamma-carboxyglutamation at Glu-48." evidence="5">
    <original>IR</original>
    <variation>A</variation>
    <location>
        <begin position="45"/>
        <end position="46"/>
    </location>
</feature>
<feature type="mutagenesis site" description="2.5-fold decrease in inhibitory potency on alpha-7/CHRNA7 nAChR; when associated with lack of gamma-carboxyglutamation at Glu-48." evidence="5">
    <location>
        <begin position="45"/>
        <end position="46"/>
    </location>
</feature>
<feature type="mutagenesis site" description="No change in inhibitory potency on alpha-7/CHRNA7, 4.6-fold decrease or small increase in inhibitory potency on alpha-3-beta-2/CHRNA3-CHRNB2 (depending on experiments), 2-fold decrease or no change in inhibitory potency on alpha-4-beta-2/CHRNA4-CHRNB2 nAChR (depending on experiments); when associated with lack of gamma-carboxyglutamation at Glu-48." evidence="5 6">
    <original>I</original>
    <variation>A</variation>
    <location>
        <position position="45"/>
    </location>
</feature>
<feature type="mutagenesis site" description="2.5-fold decrease in inhibitory potency on alpha-7/CHRNA7, very important decrease in inhibitory potency on alpha-3-beta-2/CHRNA3-CHRNB2 nAChR, and loss of activity on alpha-4-beta-2/CHRNA4-CHRNB2 nAChR; when associated with lack of gamma-carboxyglutamation at Glu-48." evidence="5 6">
    <original>R</original>
    <variation>A</variation>
    <location>
        <position position="46"/>
    </location>
</feature>
<feature type="mutagenesis site" description="Loss in inhibitory potency on alpha-4-beta-2/CHRNA4-CHRNB2 and loss in inhibitory potency on alpha-3-beta-2/CHRNA3-CHRNB2; when associated with lack of gamma-carboxyglutamation at Glu-48." evidence="6">
    <original>R</original>
    <variation>K</variation>
    <location>
        <position position="46"/>
    </location>
</feature>
<feature type="mutagenesis site" description="8.3-fold decrease in inhibitory potency on alpha-7/CHRNA7, important decrease in inhibitory potency on alpha-3-beta-2/CHRNA3-CHRNB2 nAChR, and loss of activity on alpha-4-beta-2/CHRNA4-CHRNB2 nAChR; when associated with lack of gamma-carboxyglutamation at Glu-48." evidence="5 6">
    <original>D</original>
    <variation>A</variation>
    <location>
        <position position="47"/>
    </location>
</feature>
<feature type="mutagenesis site" description="Loss in inhibitory potency on alpha-4-beta-2/CHRNA4-CHRNB2 and loss in inhibitory potency on alpha-3-beta-2/CHRNA3-CHRNB2; when associated with lack of gamma-carboxyglutamation at Glu-48." evidence="6">
    <original>D</original>
    <variation>N</variation>
    <location>
        <position position="47"/>
    </location>
</feature>
<feature type="mutagenesis site" description="No change in inhibitory potency on alpha-7/CHRNA7, no change or small increase in inhibitory potency on alpha-3-beta-2/CHRNA3-CHRNB2 nAChR, and small increase in inhibitory potency on alpha-4-beta-2/CHRNA4-CHRNB2 nAChR; when associated with lack of gamma-carboxyglutamation at Glu-48. 19.7-fold decrease in inhibitory potency on alpha-7/CHRNA7, 22.9-fold decrease in inhibitory potency on alpha-3-beta-2/CHRNA3-CHRNB2 nAChR, and loss of activity on alpha-4-beta-2/CHRNA4-CHRNB2 nAChR; when associated with 45-I--D-47 DEL." evidence="5 6">
    <original>E</original>
    <variation>A</variation>
    <location>
        <position position="48"/>
    </location>
</feature>
<feature type="mutagenesis site" description="Loss in inhibitory potency on alpha-4-beta-2/CHRNA4-CHRNB2 and loss in inhibitory potency on alpha-3-beta-2/CHRNA3-CHRNB2; when associated with lack of gamma-carboxyglutamation at Glu-48." evidence="6">
    <original>E</original>
    <variation>Q</variation>
    <location>
        <position position="48"/>
    </location>
</feature>
<feature type="mutagenesis site" description="2.5-fold and 3.3-fold decrease in inhibitory potency on alpha-7/CHRNA7 and alpha-4-beta-2/CHRNA4-CHRNB2 nAChR, and 1.4-fold increase in inhibitory potency on alpha-3-beta-2/CHRNA3-CHRNB2 nAChR; when associated with lack of gamma-carboxyglutamation at Glu-48." evidence="5">
    <original>S</original>
    <variation>A</variation>
    <location>
        <position position="51"/>
    </location>
</feature>
<feature type="mutagenesis site" description="Important decrease in inhibitory potency on alpha-7/CHRNA7 nAChR, no change in inhibitory potency on alpha-3-beta-2/CHRNA3-CHRNB2 nAChR and complete loss of activity on alpha-4-beta-2/CHRNA4-CHRNB2 nAChR; when associated with lack of gamma-carboxyglutamation at Glu-48." evidence="5">
    <original>N</original>
    <variation>A</variation>
    <location>
        <position position="52"/>
    </location>
</feature>
<feature type="mutagenesis site" description="17.7-fold and 50-fold decrease in inhibitory potency on alpha-7/CHRNA7 and alpha-3-beta-2/CHRNA3-CHRNB2 nAChR, respectively, and complete loss of activity on alpha-4-beta-2/CHRNA4-CHRNB2 nAChR; when associated with lack of gamma-carboxyglutamation at Glu-48." evidence="5">
    <original>P</original>
    <variation>A</variation>
    <location>
        <position position="53"/>
    </location>
</feature>
<feature type="mutagenesis site" description="Loss of inhibitory potency on all receptors tested (alpha-4-beta-2/CHRNA4-CHRNB2, alpha-7/CHRNA7, and alpha-3-beta-2/CHRNA3-CHRNB2); when associated with lack of gamma-carboxyglutamation at Glu-48." evidence="7">
    <original>A</original>
    <variation>Q</variation>
    <location>
        <position position="54"/>
    </location>
</feature>
<feature type="mutagenesis site" description="No change in inhibitory potency on alpha-4-beta-2/CHRNA4-CHRNB2 and important decrease in inhibitory potency on alpha-3-beta-2/CHRNA3-CHRNB2; when associated with lack of gamma-carboxyglutamation at Glu-48." evidence="6">
    <original>A</original>
    <variation>S</variation>
    <location>
        <position position="54"/>
    </location>
</feature>
<feature type="mutagenesis site" description="Loss in inhibitory potency on alpha-4-beta-2/CHRNA4-CHRNB2 and loss in inhibitory potency on alpha-3-beta-2/CHRNA3-CHRNB2; when associated with lack of gamma-carboxyglutamation at Glu-48." evidence="6">
    <original>A</original>
    <variation>T</variation>
    <location>
        <position position="54"/>
    </location>
</feature>
<feature type="mutagenesis site" description="&gt;10-fold increase in selectivity on alpha-4-beta-2/CHRNA4-CHRNB2 over alpha-7/CHRNA7; when associated with lack of gamma-carboxyglutamation at Glu-48." evidence="7">
    <original>A</original>
    <variation>V</variation>
    <location>
        <position position="54"/>
    </location>
</feature>
<feature type="mutagenesis site" description="3.2-fold decrease in inhibitory potency on alpha3-beta-2/CHRNA3-CHRNB2, 13.2-fold decrease in inhibitory potency on alpha-4-beta-2/CHRNA4-CHRNB2, and 10.7-fold decrease in inhibitory potency on alpha-7/CHRNA7 nAChRs. 9.6-fold decrease in inhibitory potency on alpha-7/CHRNA7, 3.1-fold decrease in inhibitory potency on alpha-3-beta-2/CHRNA3-CHRNB2 nAChR, and complete loss of activity on alpha-4-beta-2/CHRNA4-CHRNB2 nAChR; when associated with lack of gamma-carboxyglutamation at Glu-48." evidence="3 5">
    <original>R</original>
    <variation>A</variation>
    <location>
        <position position="56"/>
    </location>
</feature>
<feature type="mutagenesis site" description="2.2-fold decrease in inhibitory potency on alpha-7/CHRNA7 nAChR, 5.7-fold increase in inhibitory potency on alpha-3-beta-2/CHRNA3-CHRNB2 nAChR, and no change in activity on alpha-4-beta-2/CHRNA4-CHRNB2 nAChR; when associated with lack of gamma-carboxyglutamation at Glu-48." evidence="5">
    <original>V</original>
    <variation>A</variation>
    <location>
        <position position="57"/>
    </location>
</feature>
<feature type="mutagenesis site" description="Loss in inhibitory potency on alpha-4-beta-2/CHRNA4-CHRNB2 and very important decrease in inhibitory potency on alpha-3-beta-2/CHRNA3-CHRNB2; when associated with lack of gamma-carboxyglutamation at Glu-48." evidence="6">
    <original>V</original>
    <variation>F</variation>
    <location>
        <position position="57"/>
    </location>
</feature>
<feature type="mutagenesis site" description="2-3-fold decrease in inhibitory activity on alpha-4-beta-2/CHRNA4-CHRNB2 and alpha-7/CHRNA7, and 10-fold increase in inhibitory activity on alpha-3-beta-2/CHRNA3-CHRNB2; when associated with lack of gamma-carboxyglutamation at Glu-48." evidence="7">
    <original>V</original>
    <variation>I</variation>
    <location>
        <position position="57"/>
    </location>
</feature>
<feature type="mutagenesis site" description="No change in inhibitory potency on alpha-4-beta-2/CHRNA4-CHRNB2 and important decrease in inhibitory potency on alpha-3-beta-2/CHRNA3-CHRNB2; when associated with lack of gamma-carboxyglutamation at Glu-48." evidence="6">
    <original>V</original>
    <variation>I</variation>
    <location>
        <position position="57"/>
    </location>
</feature>
<feature type="mutagenesis site" description="Loss in inhibitory potency on alpha-4-beta-2/CHRNA4-CHRNB2 and loss in inhibitory potency on alpha-3-beta-2/CHRNA3-CHRNB2; when associated with lack of gamma-carboxyglutamation at Glu-48." evidence="6">
    <original>V</original>
    <variation>L</variation>
    <variation>W</variation>
    <location>
        <position position="57"/>
    </location>
</feature>
<feature type="mutagenesis site" description="No change in inhibitory potency on alpha-4-beta-2/CHRNA4-CHRNB2 and small increase in inhibitory potency on alpha-3-beta-2/CHRNA3-CHRNB2; when associated with lack of gamma-carboxyglutamation at Glu-48." evidence="6">
    <original>V</original>
    <variation>S</variation>
    <location>
        <position position="57"/>
    </location>
</feature>
<feature type="mutagenesis site" description="No change in inhibitory potency on alpha-4-beta-2/CHRNA4-CHRNB2 and no change in inhibitory potency on alpha-4-beta-2/CHRNA4-CHRNB2; when associated with lack of gamma-carboxyglutamation at Glu-48." evidence="6">
    <original>V</original>
    <variation>T</variation>
    <location>
        <position position="57"/>
    </location>
</feature>
<feature type="mutagenesis site" description="40-fold increase in selectivity on alpha-4-beta-2/CHRNA4-CHRNB2 over alpha-7/CHRNA7; when associated with lack of gamma-carboxyglutamation at Glu-48." evidence="7">
    <original>V</original>
    <variation>Y</variation>
    <location>
        <position position="57"/>
    </location>
</feature>
<feature type="mutagenesis site" description="10.1-fold decrease in inhibitory potency on alpha-7/CHRNA7 nAChR, 2.6-fold increase in inhibitory potency on alpha-3-beta-2/CHRNA3-CHRNB2 nAChR, and complete loss of activity on alpha-4-beta-2/CHRNA4-CHRNB2 nAChR; when associated with lack of gamma-carboxyglutamation at Glu-48." evidence="5">
    <original>N</original>
    <variation>A</variation>
    <location>
        <position position="58"/>
    </location>
</feature>
<feature type="mutagenesis site" description="No change in inhibitory potency on alpha-7/CHRNA7 and alpha-3-beta-2/CHRNA3-CHRNB2 nAChR and complete loss of activity on alpha-4-beta-2/CHRNA4-CHRNB2 nAChR; when associated with lack of gamma-carboxyglutamation at Glu-48." evidence="5">
    <original>N</original>
    <variation>A</variation>
    <location>
        <position position="59"/>
    </location>
</feature>
<feature type="mutagenesis site" description="Loss in inhibitory potency on alpha-4-beta-2/CHRNA4-CHRNB2 and very important decrease in inhibitory potency on alpha-3-beta-2/CHRNA3-CHRNB2; when associated with lack of gamma-carboxyglutamation at Glu-48." evidence="6">
    <original>N</original>
    <variation>H</variation>
    <location>
        <position position="59"/>
    </location>
</feature>
<feature type="mutagenesis site" description="Loss in inhibitory potency on alpha-4-beta-2/CHRNA4-CHRNB2 and loss in inhibitory potency on alpha-3-beta-2/CHRNA3-CHRNB2; when associated with lack of gamma-carboxyglutamation at Glu-48." evidence="6">
    <original>N</original>
    <variation>K</variation>
    <location>
        <position position="59"/>
    </location>
</feature>
<feature type="mutagenesis site" description="2.5-fold and 4-fold decrease in inhibitory potency on alpha-7/CHRNA7 and alpha-3-beta-2/CHRNA3-CHRNB2 nAChR, respectively, and complete loss of activity on alpha-4-beta-2/CHRNA4-CHRNB2 nAChR; when associated with lack of gamma-carboxyglutamation at Glu-48." evidence="5">
    <original>P</original>
    <variation>A</variation>
    <location>
        <position position="60"/>
    </location>
</feature>
<feature type="mutagenesis site" description="No change in inhibitory potency on alpha-7/CHRNA7 and alpha-3-beta-2/CHRNA3-CHRNB2 nAChR, and 4.7-fold decrease in inhibitory potency on alpha-4-beta-2/CHRNA4-CHRNB2 nAChR; when associated with lack of gamma-carboxyglutamation at Glu-48." evidence="5">
    <original>H</original>
    <variation>A</variation>
    <location>
        <position position="61"/>
    </location>
</feature>
<feature type="mutagenesis site" description="1.5-fold and 12-fold decrease in inhibitory potency on alpha-7/CHRNA7 and alpha-3-beta-2/CHRNA3-CHRNB2 nAChR, and complete loss of activity on alpha-4-beta-2/CHRNA4-CHRNB2 nAChR; when associated with lack of gamma-carboxyglutamation at Glu-48." evidence="5">
    <original>V</original>
    <variation>A</variation>
    <location>
        <position position="62"/>
    </location>
</feature>
<feature type="mutagenesis site" description="Small increase in inhibitory potency on alpha-4-beta-2/CHRNA4-CHRNB2 and loss in inhibitory potency on alpha-3-beta-2/CHRNA3-CHRNB2; when associated with lack of gamma-carboxyglutamation at Glu-48." evidence="6">
    <original>V</original>
    <variation>N</variation>
    <location>
        <position position="62"/>
    </location>
</feature>
<feature type="mutagenesis site" description="Loss in inhibitory potency on alpha-4-beta-2/CHRNA4-CHRNB2 and loss in inhibitory potency on alpha-3-beta-2/CHRNA3-CHRNB2; when associated with lack of gamma-carboxyglutamation at Glu-48." evidence="6">
    <original>V</original>
    <variation>Y</variation>
    <variation>Q</variation>
    <location>
        <position position="62"/>
    </location>
</feature>
<feature type="turn" evidence="12">
    <location>
        <begin position="49"/>
        <end position="51"/>
    </location>
</feature>
<feature type="helix" evidence="12">
    <location>
        <begin position="53"/>
        <end position="58"/>
    </location>
</feature>
<feature type="strand" evidence="13">
    <location>
        <begin position="59"/>
        <end position="61"/>
    </location>
</feature>
<comment type="function">
    <text evidence="3 4 5 6">Alpha-conotoxins act on postsynaptic membranes, they bind to the nicotinic acetylcholine receptors (nAChR) and thus inhibit them. This toxin reversibly blocks alpha-3-beta-2/CHRNA3-CHRNB2 (IC(50)=3.1-5.1 nM), alpha-7/CHRNA7 (IC(50)=4.5-5.1 nM), and alpha-4-beta-2/CHRNA4-CHRNB2 (IC(50)=128.6-390 nM) nAChRs.</text>
</comment>
<comment type="subcellular location">
    <subcellularLocation>
        <location evidence="3">Secreted</location>
    </subcellularLocation>
</comment>
<comment type="tissue specificity">
    <text evidence="10">Expressed by the venom duct.</text>
</comment>
<comment type="domain">
    <text evidence="9">The cysteine framework is I (CC-C-C). Alpha4/7 pattern.</text>
</comment>
<comment type="PTM">
    <text evidence="5">Gamma-carboxyglutamation of Glu-48 seems to be not important for nAChR inhibition, since synthetic peptides without this modification do not show change in inhibition of alpha-7/CHRNA7 and alpha-3-beta-2/CHRNA3-CHRNB2 nAChR and show a 2.3-fold increase in inhibition of alpha-4-beta-2/CHRNA4-CHRNB2 nAChR.</text>
</comment>
<comment type="PTM">
    <text evidence="5">Hydroxylation of Pro-60 seems to be important for nAChR inhibition, since synthetic peptides without this modification show a small decrease in inhibition of alpha-7/CHRNA7 and alpha-3-beta-2/CHRNA3-CHRNB2 nAChR and a very important decrease in inhibition of alpha-4-beta-2/CHRNA4-CHRNB2 nAChR.</text>
</comment>
<comment type="PTM">
    <text evidence="5">An amidation of Cys-63 increases potency against alpha-7/CHRNA7 (2.6-fold) and alpha-3-beta-2/CHRNA3-CHRNB2 (2-fold) nAChR. On the other hand, the peptide has no more activity on alpha-4-beta-2/CHRNA4-CHRNB2 nAChR with an amidated Cys-63.</text>
</comment>
<comment type="mass spectrometry"/>
<comment type="miscellaneous">
    <text evidence="6">The mutant [V62N] (V18N) shows a very important selectivity for alpha-4-beta-2/CHRNA4-CHRNB2 over alpha-3-beta-2/CHRNA3-CHRNB2 nAChR.</text>
</comment>
<comment type="miscellaneous">
    <text evidence="3 4">Negative results: does not inhibit neuronal alpha-3-beta-4/CHRNA3-CHRNB4 and alpha-4-beta-4/CHRNA4-CHRNB4 nAChR, and muscle alpha-1-beta-1-gamma-delta/CHRNA1-CHRNB1-CHRND nAChR.</text>
</comment>
<comment type="similarity">
    <text evidence="9">Belongs to the conotoxin A superfamily.</text>
</comment>
<accession>P60274</accession>
<accession>X5IH33</accession>
<reference key="1">
    <citation type="journal article" date="2014" name="Nat. Commun.">
        <title>Evolution of separate predation- and defence-evoked venoms in carnivorous cone snails.</title>
        <authorList>
            <person name="Dutertre S."/>
            <person name="Jin A.-H."/>
            <person name="Vetter I."/>
            <person name="Hamilton B."/>
            <person name="Sunagar K."/>
            <person name="Lavergne V."/>
            <person name="Dutertre V."/>
            <person name="Fry B.G."/>
            <person name="Antunes A."/>
            <person name="Venter D.J."/>
            <person name="Alewood P.F."/>
            <person name="Lewis R.J."/>
        </authorList>
    </citation>
    <scope>NUCLEOTIDE SEQUENCE [MRNA]</scope>
    <source>
        <tissue>Venom duct</tissue>
    </source>
</reference>
<reference key="2">
    <citation type="journal article" date="2003" name="J. Biol. Chem.">
        <title>Isolation, structure, and activity of GID, a novel alpha 4/7-conotoxin with an extended N-terminal sequence.</title>
        <authorList>
            <person name="Nicke A."/>
            <person name="Loughnan M.L."/>
            <person name="Millard E.L."/>
            <person name="Alewood P.F."/>
            <person name="Adams D.J."/>
            <person name="Daly N.L."/>
            <person name="Craik D.J."/>
            <person name="Lewis R.J."/>
        </authorList>
    </citation>
    <scope>PROTEIN SEQUENCE OF 45-63</scope>
    <scope>FUNCTION</scope>
    <scope>HYDROXYLATION AT PRO-60</scope>
    <scope>GAMMA-CARBOXYGLUTAMATION AT GLU-48</scope>
    <scope>STRUCTURE BY NMR OF 45-63</scope>
    <scope>DISULFIDE BONDS</scope>
    <scope>SYNTHESIS</scope>
    <scope>MASS SPECTROMETRY</scope>
    <scope>MUTAGENESIS OF ARG-56 AND 1-ILE--GLU-4</scope>
    <scope>SUBCELLULAR LOCATION</scope>
    <source>
        <tissue>Venom</tissue>
    </source>
</reference>
<reference key="3">
    <citation type="journal article" date="2005" name="J. Biol. Chem.">
        <title>Beta2 subunit contribution to 4/7 alpha-conotoxin binding to the nicotinic acetylcholine receptor.</title>
        <authorList>
            <person name="Dutertre S."/>
            <person name="Nicke A."/>
            <person name="Lewis R.J."/>
        </authorList>
    </citation>
    <scope>FUNCTION ON ALPHA-3-BETA-2 AND ALPHA-4-BETA-2 NACHR</scope>
</reference>
<reference key="4">
    <citation type="journal article" date="2009" name="J. Biol. Chem.">
        <title>Inhibition of neuronal nicotinic acetylcholine receptor subtypes by alpha-Conotoxin GID and analogues.</title>
        <authorList>
            <person name="Millard E.L."/>
            <person name="Nevin S.T."/>
            <person name="Loughnan M.L."/>
            <person name="Nicke A."/>
            <person name="Clark R.J."/>
            <person name="Alewood P.F."/>
            <person name="Lewis R.J."/>
            <person name="Adams D.J."/>
            <person name="Craik D.J."/>
            <person name="Daly N.L."/>
        </authorList>
    </citation>
    <scope>FUNCTION</scope>
    <scope>MUTAGENESIS OF 45-ILE--ASP-47; 45-ILE-ARG-46; ILE-45; ARG-46; ASP-47; GLU-48; SER-51; ASN-52; PRO-53; ARG-56; VAL-57; ASN-58; ASN-59; PRO-60; HIS-61 AND VAL-62</scope>
    <scope>STRUCTURE BY NMR OF [45-ILE--GLU-48 DEL]GID AND [ARG-56]GID MUTANTS</scope>
</reference>
<reference key="5">
    <citation type="journal article" date="2014" name="Biopolymers">
        <title>Design and synthesis of alpha-conotoxin GID analogues as selective alpha4beta2 nicotinic acetylcholine receptor antagonists.</title>
        <authorList>
            <person name="Banerjee J."/>
            <person name="Yongye A.B."/>
            <person name="Chang Y.P."/>
            <person name="Gyanda R."/>
            <person name="Medina-Franco J.L."/>
            <person name="Armishaw C.J."/>
        </authorList>
    </citation>
    <scope>FUNCTION</scope>
    <scope>MUTAGENESIS OF ILE-45; ARG-46; ASP-47; GLU-48; ALA-54; VAL-57; ASN-59 AND VAL-62</scope>
    <scope>SYNTHESIS OF 45-63</scope>
</reference>
<reference key="6">
    <citation type="journal article" date="2017" name="Proc. Natl. Acad. Sci. U.S.A.">
        <title>Discovery of peptide ligands through docking and virtual screening at nicotinic acetylcholine receptor homology models.</title>
        <authorList>
            <person name="Leffler A.E."/>
            <person name="Kuryatov A."/>
            <person name="Zebroski H.A."/>
            <person name="Powell S.R."/>
            <person name="Filipenko P."/>
            <person name="Hussein A.K."/>
            <person name="Gorson J."/>
            <person name="Heizmann A."/>
            <person name="Lyskov S."/>
            <person name="Tsien R.W."/>
            <person name="Poget S.F."/>
            <person name="Nicke A."/>
            <person name="Lindstrom J."/>
            <person name="Rudy B."/>
            <person name="Bonneau R."/>
            <person name="Holford M."/>
        </authorList>
    </citation>
    <scope>STRUCTURE BY NMR OF 45-63 OF MUTANTS ALA-54 AND TYR-57</scope>
    <scope>MUTAGENESIS OF ALA-54 AND VAL-57</scope>
    <scope>SYNTHESIS OF 45-63</scope>
</reference>
<proteinExistence type="evidence at protein level"/>
<protein>
    <recommendedName>
        <fullName evidence="8">Alpha-conotoxin GID</fullName>
    </recommendedName>
</protein>
<keyword id="KW-0002">3D-structure</keyword>
<keyword id="KW-0008">Acetylcholine receptor inhibiting toxin</keyword>
<keyword id="KW-0903">Direct protein sequencing</keyword>
<keyword id="KW-1015">Disulfide bond</keyword>
<keyword id="KW-0301">Gamma-carboxyglutamic acid</keyword>
<keyword id="KW-0379">Hydroxylation</keyword>
<keyword id="KW-0872">Ion channel impairing toxin</keyword>
<keyword id="KW-0528">Neurotoxin</keyword>
<keyword id="KW-0629">Postsynaptic neurotoxin</keyword>
<keyword id="KW-0964">Secreted</keyword>
<keyword id="KW-0732">Signal</keyword>
<keyword id="KW-0800">Toxin</keyword>
<name>CA1D_CONGE</name>